<sequence length="323" mass="35789">MKTTFLDFEQPIAELEAKIEELRFVQDDSAVDISEEIERLSKKSQQLTKDLYTNLTPWQVSQIARHPQRPYTQDYINELFTDFHELHGDRSFADDLSIVGGLARFNGQPCMVIGHQKGRDTKERALRNFGMPRPEGYRKAERLMRLAEKFGLPLFTFIDTPGAYPGIGAEERGQSEAIGRNLYVMAELKTPIISTVIGEGGSGGALAVAVADSVLMLQFSTYSVISPEGCASILWKSAAKAPEAAEALGLTAHRLKALGLIDKIVSEPLGGAHRDPKGMAAMLRRALADSLRQFHGMSTNDLRQRRFDRLMAYGKFKETTPGA</sequence>
<organism>
    <name type="scientific">Paraburkholderia phymatum (strain DSM 17167 / CIP 108236 / LMG 21445 / STM815)</name>
    <name type="common">Burkholderia phymatum</name>
    <dbReference type="NCBI Taxonomy" id="391038"/>
    <lineage>
        <taxon>Bacteria</taxon>
        <taxon>Pseudomonadati</taxon>
        <taxon>Pseudomonadota</taxon>
        <taxon>Betaproteobacteria</taxon>
        <taxon>Burkholderiales</taxon>
        <taxon>Burkholderiaceae</taxon>
        <taxon>Paraburkholderia</taxon>
    </lineage>
</organism>
<keyword id="KW-0067">ATP-binding</keyword>
<keyword id="KW-0963">Cytoplasm</keyword>
<keyword id="KW-0275">Fatty acid biosynthesis</keyword>
<keyword id="KW-0276">Fatty acid metabolism</keyword>
<keyword id="KW-0444">Lipid biosynthesis</keyword>
<keyword id="KW-0443">Lipid metabolism</keyword>
<keyword id="KW-0547">Nucleotide-binding</keyword>
<keyword id="KW-1185">Reference proteome</keyword>
<keyword id="KW-0808">Transferase</keyword>
<evidence type="ECO:0000255" key="1">
    <source>
        <dbReference type="HAMAP-Rule" id="MF_00823"/>
    </source>
</evidence>
<evidence type="ECO:0000255" key="2">
    <source>
        <dbReference type="PROSITE-ProRule" id="PRU01137"/>
    </source>
</evidence>
<gene>
    <name evidence="1" type="primary">accA</name>
    <name type="ordered locus">Bphy_1388</name>
</gene>
<comment type="function">
    <text evidence="1">Component of the acetyl coenzyme A carboxylase (ACC) complex. First, biotin carboxylase catalyzes the carboxylation of biotin on its carrier protein (BCCP) and then the CO(2) group is transferred by the carboxyltransferase to acetyl-CoA to form malonyl-CoA.</text>
</comment>
<comment type="catalytic activity">
    <reaction evidence="1">
        <text>N(6)-carboxybiotinyl-L-lysyl-[protein] + acetyl-CoA = N(6)-biotinyl-L-lysyl-[protein] + malonyl-CoA</text>
        <dbReference type="Rhea" id="RHEA:54728"/>
        <dbReference type="Rhea" id="RHEA-COMP:10505"/>
        <dbReference type="Rhea" id="RHEA-COMP:10506"/>
        <dbReference type="ChEBI" id="CHEBI:57288"/>
        <dbReference type="ChEBI" id="CHEBI:57384"/>
        <dbReference type="ChEBI" id="CHEBI:83144"/>
        <dbReference type="ChEBI" id="CHEBI:83145"/>
        <dbReference type="EC" id="2.1.3.15"/>
    </reaction>
</comment>
<comment type="pathway">
    <text evidence="1">Lipid metabolism; malonyl-CoA biosynthesis; malonyl-CoA from acetyl-CoA: step 1/1.</text>
</comment>
<comment type="subunit">
    <text evidence="1">Acetyl-CoA carboxylase is a heterohexamer composed of biotin carboxyl carrier protein (AccB), biotin carboxylase (AccC) and two subunits each of ACCase subunit alpha (AccA) and ACCase subunit beta (AccD).</text>
</comment>
<comment type="subcellular location">
    <subcellularLocation>
        <location evidence="1">Cytoplasm</location>
    </subcellularLocation>
</comment>
<comment type="similarity">
    <text evidence="1">Belongs to the AccA family.</text>
</comment>
<proteinExistence type="inferred from homology"/>
<accession>B2JIR9</accession>
<reference key="1">
    <citation type="journal article" date="2014" name="Stand. Genomic Sci.">
        <title>Complete genome sequence of Burkholderia phymatum STM815(T), a broad host range and efficient nitrogen-fixing symbiont of Mimosa species.</title>
        <authorList>
            <person name="Moulin L."/>
            <person name="Klonowska A."/>
            <person name="Caroline B."/>
            <person name="Booth K."/>
            <person name="Vriezen J.A."/>
            <person name="Melkonian R."/>
            <person name="James E.K."/>
            <person name="Young J.P."/>
            <person name="Bena G."/>
            <person name="Hauser L."/>
            <person name="Land M."/>
            <person name="Kyrpides N."/>
            <person name="Bruce D."/>
            <person name="Chain P."/>
            <person name="Copeland A."/>
            <person name="Pitluck S."/>
            <person name="Woyke T."/>
            <person name="Lizotte-Waniewski M."/>
            <person name="Bristow J."/>
            <person name="Riley M."/>
        </authorList>
    </citation>
    <scope>NUCLEOTIDE SEQUENCE [LARGE SCALE GENOMIC DNA]</scope>
    <source>
        <strain>DSM 17167 / CIP 108236 / LMG 21445 / STM815</strain>
    </source>
</reference>
<protein>
    <recommendedName>
        <fullName evidence="1">Acetyl-coenzyme A carboxylase carboxyl transferase subunit alpha</fullName>
        <shortName evidence="1">ACCase subunit alpha</shortName>
        <shortName evidence="1">Acetyl-CoA carboxylase carboxyltransferase subunit alpha</shortName>
        <ecNumber evidence="1">2.1.3.15</ecNumber>
    </recommendedName>
</protein>
<name>ACCA_PARP8</name>
<dbReference type="EC" id="2.1.3.15" evidence="1"/>
<dbReference type="EMBL" id="CP001043">
    <property type="protein sequence ID" value="ACC70570.1"/>
    <property type="molecule type" value="Genomic_DNA"/>
</dbReference>
<dbReference type="RefSeq" id="WP_012400784.1">
    <property type="nucleotide sequence ID" value="NC_010622.1"/>
</dbReference>
<dbReference type="SMR" id="B2JIR9"/>
<dbReference type="STRING" id="391038.Bphy_1388"/>
<dbReference type="KEGG" id="bph:Bphy_1388"/>
<dbReference type="eggNOG" id="COG0825">
    <property type="taxonomic scope" value="Bacteria"/>
</dbReference>
<dbReference type="HOGENOM" id="CLU_015486_0_2_4"/>
<dbReference type="OrthoDB" id="9808023at2"/>
<dbReference type="UniPathway" id="UPA00655">
    <property type="reaction ID" value="UER00711"/>
</dbReference>
<dbReference type="Proteomes" id="UP000001192">
    <property type="component" value="Chromosome 1"/>
</dbReference>
<dbReference type="GO" id="GO:0009317">
    <property type="term" value="C:acetyl-CoA carboxylase complex"/>
    <property type="evidence" value="ECO:0007669"/>
    <property type="project" value="InterPro"/>
</dbReference>
<dbReference type="GO" id="GO:0003989">
    <property type="term" value="F:acetyl-CoA carboxylase activity"/>
    <property type="evidence" value="ECO:0007669"/>
    <property type="project" value="InterPro"/>
</dbReference>
<dbReference type="GO" id="GO:0005524">
    <property type="term" value="F:ATP binding"/>
    <property type="evidence" value="ECO:0007669"/>
    <property type="project" value="UniProtKB-KW"/>
</dbReference>
<dbReference type="GO" id="GO:0016743">
    <property type="term" value="F:carboxyl- or carbamoyltransferase activity"/>
    <property type="evidence" value="ECO:0007669"/>
    <property type="project" value="UniProtKB-UniRule"/>
</dbReference>
<dbReference type="GO" id="GO:0006633">
    <property type="term" value="P:fatty acid biosynthetic process"/>
    <property type="evidence" value="ECO:0007669"/>
    <property type="project" value="UniProtKB-KW"/>
</dbReference>
<dbReference type="GO" id="GO:2001295">
    <property type="term" value="P:malonyl-CoA biosynthetic process"/>
    <property type="evidence" value="ECO:0007669"/>
    <property type="project" value="UniProtKB-UniRule"/>
</dbReference>
<dbReference type="Gene3D" id="3.90.226.10">
    <property type="entry name" value="2-enoyl-CoA Hydratase, Chain A, domain 1"/>
    <property type="match status" value="1"/>
</dbReference>
<dbReference type="HAMAP" id="MF_00823">
    <property type="entry name" value="AcetylCoA_CT_alpha"/>
    <property type="match status" value="1"/>
</dbReference>
<dbReference type="InterPro" id="IPR001095">
    <property type="entry name" value="Acetyl_CoA_COase_a_su"/>
</dbReference>
<dbReference type="InterPro" id="IPR029045">
    <property type="entry name" value="ClpP/crotonase-like_dom_sf"/>
</dbReference>
<dbReference type="InterPro" id="IPR011763">
    <property type="entry name" value="COA_CT_C"/>
</dbReference>
<dbReference type="NCBIfam" id="TIGR00513">
    <property type="entry name" value="accA"/>
    <property type="match status" value="1"/>
</dbReference>
<dbReference type="NCBIfam" id="NF041504">
    <property type="entry name" value="AccA_sub"/>
    <property type="match status" value="1"/>
</dbReference>
<dbReference type="NCBIfam" id="NF004344">
    <property type="entry name" value="PRK05724.1"/>
    <property type="match status" value="1"/>
</dbReference>
<dbReference type="PANTHER" id="PTHR42853">
    <property type="entry name" value="ACETYL-COENZYME A CARBOXYLASE CARBOXYL TRANSFERASE SUBUNIT ALPHA"/>
    <property type="match status" value="1"/>
</dbReference>
<dbReference type="PANTHER" id="PTHR42853:SF3">
    <property type="entry name" value="ACETYL-COENZYME A CARBOXYLASE CARBOXYL TRANSFERASE SUBUNIT ALPHA, CHLOROPLASTIC"/>
    <property type="match status" value="1"/>
</dbReference>
<dbReference type="Pfam" id="PF03255">
    <property type="entry name" value="ACCA"/>
    <property type="match status" value="1"/>
</dbReference>
<dbReference type="PRINTS" id="PR01069">
    <property type="entry name" value="ACCCTRFRASEA"/>
</dbReference>
<dbReference type="SUPFAM" id="SSF52096">
    <property type="entry name" value="ClpP/crotonase"/>
    <property type="match status" value="1"/>
</dbReference>
<dbReference type="PROSITE" id="PS50989">
    <property type="entry name" value="COA_CT_CTER"/>
    <property type="match status" value="1"/>
</dbReference>
<feature type="chain" id="PRO_1000134466" description="Acetyl-coenzyme A carboxylase carboxyl transferase subunit alpha">
    <location>
        <begin position="1"/>
        <end position="323"/>
    </location>
</feature>
<feature type="domain" description="CoA carboxyltransferase C-terminal" evidence="2">
    <location>
        <begin position="39"/>
        <end position="293"/>
    </location>
</feature>